<proteinExistence type="predicted"/>
<dbReference type="EMBL" id="X00039">
    <property type="protein sequence ID" value="CAA24920.1"/>
    <property type="molecule type" value="Genomic_DNA"/>
</dbReference>
<dbReference type="EMBL" id="AF158101">
    <property type="protein sequence ID" value="AAD42441.1"/>
    <property type="molecule type" value="Genomic_DNA"/>
</dbReference>
<dbReference type="EMBL" id="X53848">
    <property type="status" value="NOT_ANNOTATED_CDS"/>
    <property type="molecule type" value="Genomic_DNA"/>
</dbReference>
<dbReference type="PIR" id="S27151">
    <property type="entry name" value="S27151"/>
</dbReference>
<dbReference type="RefSeq" id="NP_049814.1">
    <property type="nucleotide sequence ID" value="NC_000866.4"/>
</dbReference>
<dbReference type="GeneID" id="1258603"/>
<dbReference type="KEGG" id="vg:1258603"/>
<dbReference type="OrthoDB" id="19019at10239"/>
<dbReference type="Proteomes" id="UP000009087">
    <property type="component" value="Segment"/>
</dbReference>
<dbReference type="InterPro" id="IPR021405">
    <property type="entry name" value="Phage_T4_Gp30.1"/>
</dbReference>
<dbReference type="Pfam" id="PF11243">
    <property type="entry name" value="DUF3045"/>
    <property type="match status" value="1"/>
</dbReference>
<organismHost>
    <name type="scientific">Escherichia coli</name>
    <dbReference type="NCBI Taxonomy" id="562"/>
</organismHost>
<protein>
    <recommendedName>
        <fullName>Uncharacterized 10.8 kDa protein in Gp30-rIII intergenic region</fullName>
    </recommendedName>
    <alternativeName>
        <fullName>URF Y</fullName>
    </alternativeName>
</protein>
<feature type="chain" id="PRO_0000165165" description="Uncharacterized 10.8 kDa protein in Gp30-rIII intergenic region">
    <location>
        <begin position="1"/>
        <end position="89"/>
    </location>
</feature>
<gene>
    <name type="primary">y12E</name>
    <name type="synonym">30.1</name>
</gene>
<reference key="1">
    <citation type="journal article" date="1983" name="Nucleic Acids Res.">
        <title>Primary structure and genetic organization of phage T4 DNA ligase.</title>
        <authorList>
            <person name="Armstrong J."/>
            <person name="Brown R.S."/>
            <person name="Tsugita A."/>
        </authorList>
    </citation>
    <scope>NUCLEOTIDE SEQUENCE [GENOMIC DNA]</scope>
</reference>
<reference key="2">
    <citation type="journal article" date="2003" name="Microbiol. Mol. Biol. Rev.">
        <title>Bacteriophage T4 genome.</title>
        <authorList>
            <person name="Miller E.S."/>
            <person name="Kutter E."/>
            <person name="Mosig G."/>
            <person name="Arisaka F."/>
            <person name="Kunisawa T."/>
            <person name="Ruger W."/>
        </authorList>
    </citation>
    <scope>NUCLEOTIDE SEQUENCE [LARGE SCALE GENOMIC DNA]</scope>
</reference>
<reference key="3">
    <citation type="journal article" date="1992" name="DNA Seq.">
        <title>The nucleotide sequence between genes 31 and 30 of bacteriophage T4.</title>
        <authorList>
            <person name="Nivinskas R."/>
            <person name="Zajanckauskaite A."/>
            <person name="Raudonikiene A."/>
            <person name="Viteniene I."/>
        </authorList>
    </citation>
    <scope>NUCLEOTIDE SEQUENCE [GENOMIC DNA] OF 1-31</scope>
</reference>
<name>Y12E_BPT4</name>
<organism>
    <name type="scientific">Enterobacteria phage T4</name>
    <name type="common">Bacteriophage T4</name>
    <dbReference type="NCBI Taxonomy" id="10665"/>
    <lineage>
        <taxon>Viruses</taxon>
        <taxon>Duplodnaviria</taxon>
        <taxon>Heunggongvirae</taxon>
        <taxon>Uroviricota</taxon>
        <taxon>Caudoviricetes</taxon>
        <taxon>Straboviridae</taxon>
        <taxon>Tevenvirinae</taxon>
        <taxon>Tequatrovirus</taxon>
    </lineage>
</organism>
<keyword id="KW-1185">Reference proteome</keyword>
<sequence length="89" mass="10833">MFVVHTIYENEGNTTRDYGHVNQFFRCNPEFRAQKDERIFKKCVEQGFIYIKHWMQGNKVRTTYHRSLTELNDELIYNRAVNQTLKDEQ</sequence>
<accession>P33084</accession>